<protein>
    <recommendedName>
        <fullName evidence="1">Protein Syd</fullName>
    </recommendedName>
</protein>
<dbReference type="EMBL" id="AE017340">
    <property type="protein sequence ID" value="AAV81694.1"/>
    <property type="molecule type" value="Genomic_DNA"/>
</dbReference>
<dbReference type="RefSeq" id="WP_011234105.1">
    <property type="nucleotide sequence ID" value="NC_006512.1"/>
</dbReference>
<dbReference type="SMR" id="Q5QW09"/>
<dbReference type="STRING" id="283942.IL0854"/>
<dbReference type="GeneID" id="41336010"/>
<dbReference type="KEGG" id="ilo:IL0854"/>
<dbReference type="eggNOG" id="ENOG502ZCMR">
    <property type="taxonomic scope" value="Bacteria"/>
</dbReference>
<dbReference type="HOGENOM" id="CLU_121866_0_0_6"/>
<dbReference type="OrthoDB" id="5599437at2"/>
<dbReference type="Proteomes" id="UP000001171">
    <property type="component" value="Chromosome"/>
</dbReference>
<dbReference type="GO" id="GO:0009898">
    <property type="term" value="C:cytoplasmic side of plasma membrane"/>
    <property type="evidence" value="ECO:0007669"/>
    <property type="project" value="InterPro"/>
</dbReference>
<dbReference type="CDD" id="cd16323">
    <property type="entry name" value="Syd"/>
    <property type="match status" value="1"/>
</dbReference>
<dbReference type="Gene3D" id="3.40.1580.20">
    <property type="entry name" value="Syd protein"/>
    <property type="match status" value="1"/>
</dbReference>
<dbReference type="HAMAP" id="MF_01104">
    <property type="entry name" value="Syd"/>
    <property type="match status" value="1"/>
</dbReference>
<dbReference type="InterPro" id="IPR009948">
    <property type="entry name" value="Syd"/>
</dbReference>
<dbReference type="InterPro" id="IPR038228">
    <property type="entry name" value="Syd_sf"/>
</dbReference>
<dbReference type="NCBIfam" id="NF003439">
    <property type="entry name" value="PRK04968.1"/>
    <property type="match status" value="1"/>
</dbReference>
<dbReference type="Pfam" id="PF07348">
    <property type="entry name" value="Syd"/>
    <property type="match status" value="1"/>
</dbReference>
<gene>
    <name evidence="1" type="primary">syd</name>
    <name type="ordered locus">IL0854</name>
</gene>
<reference key="1">
    <citation type="journal article" date="2004" name="Proc. Natl. Acad. Sci. U.S.A.">
        <title>Genome sequence of the deep-sea gamma-proteobacterium Idiomarina loihiensis reveals amino acid fermentation as a source of carbon and energy.</title>
        <authorList>
            <person name="Hou S."/>
            <person name="Saw J.H."/>
            <person name="Lee K.S."/>
            <person name="Freitas T.A."/>
            <person name="Belisle C."/>
            <person name="Kawarabayasi Y."/>
            <person name="Donachie S.P."/>
            <person name="Pikina A."/>
            <person name="Galperin M.Y."/>
            <person name="Koonin E.V."/>
            <person name="Makarova K.S."/>
            <person name="Omelchenko M.V."/>
            <person name="Sorokin A."/>
            <person name="Wolf Y.I."/>
            <person name="Li Q.X."/>
            <person name="Keum Y.S."/>
            <person name="Campbell S."/>
            <person name="Denery J."/>
            <person name="Aizawa S."/>
            <person name="Shibata S."/>
            <person name="Malahoff A."/>
            <person name="Alam M."/>
        </authorList>
    </citation>
    <scope>NUCLEOTIDE SEQUENCE [LARGE SCALE GENOMIC DNA]</scope>
    <source>
        <strain>ATCC BAA-735 / DSM 15497 / L2-TR</strain>
    </source>
</reference>
<proteinExistence type="inferred from homology"/>
<name>SYDP_IDILO</name>
<accession>Q5QW09</accession>
<organism>
    <name type="scientific">Idiomarina loihiensis (strain ATCC BAA-735 / DSM 15497 / L2-TR)</name>
    <dbReference type="NCBI Taxonomy" id="283942"/>
    <lineage>
        <taxon>Bacteria</taxon>
        <taxon>Pseudomonadati</taxon>
        <taxon>Pseudomonadota</taxon>
        <taxon>Gammaproteobacteria</taxon>
        <taxon>Alteromonadales</taxon>
        <taxon>Idiomarinaceae</taxon>
        <taxon>Idiomarina</taxon>
    </lineage>
</organism>
<sequence>MKTLEESIDALMTRYKENVPVRYTEYVEEWNSPIYGTVIDENTVEWTPCRQPEALNFDDLESALEMSFHQSIKTLFGRWYAGDLALDYQGHTISLLQTQSAEDGERLLENITGHILMKRRLKQPETVFIGLGSEDDGLLVTIDNQSGAVGLEWVGKEQHDVLSDSLAAWLDNCQPQVETDKNS</sequence>
<comment type="function">
    <text evidence="1">Interacts with the SecY protein in vivo. May bind preferentially to an uncomplexed state of SecY, thus functioning either as a chelating agent for excess SecY in the cell or as a regulatory factor that negatively controls the translocase function.</text>
</comment>
<comment type="subcellular location">
    <subcellularLocation>
        <location evidence="1">Cell inner membrane</location>
        <topology evidence="1">Peripheral membrane protein</topology>
        <orientation evidence="1">Cytoplasmic side</orientation>
    </subcellularLocation>
    <text evidence="1">Loosely associated with the cytoplasmic side of the inner membrane, probably via SecY.</text>
</comment>
<comment type="similarity">
    <text evidence="1">Belongs to the Syd family.</text>
</comment>
<keyword id="KW-0997">Cell inner membrane</keyword>
<keyword id="KW-1003">Cell membrane</keyword>
<keyword id="KW-0472">Membrane</keyword>
<keyword id="KW-1185">Reference proteome</keyword>
<evidence type="ECO:0000255" key="1">
    <source>
        <dbReference type="HAMAP-Rule" id="MF_01104"/>
    </source>
</evidence>
<feature type="chain" id="PRO_0000298252" description="Protein Syd">
    <location>
        <begin position="1"/>
        <end position="183"/>
    </location>
</feature>